<feature type="chain" id="PRO_0000248401" description="Mannose-1-phosphate guanyltransferase 2">
    <location>
        <begin position="1"/>
        <end position="361"/>
    </location>
</feature>
<proteinExistence type="inferred from homology"/>
<comment type="function">
    <text evidence="1">Involved in cell wall synthesis where it is required for glycosylation. Involved in cell cycle progression through cell-size checkpoint (By similarity).</text>
</comment>
<comment type="catalytic activity">
    <reaction>
        <text>alpha-D-mannose 1-phosphate + GTP + H(+) = GDP-alpha-D-mannose + diphosphate</text>
        <dbReference type="Rhea" id="RHEA:15229"/>
        <dbReference type="ChEBI" id="CHEBI:15378"/>
        <dbReference type="ChEBI" id="CHEBI:33019"/>
        <dbReference type="ChEBI" id="CHEBI:37565"/>
        <dbReference type="ChEBI" id="CHEBI:57527"/>
        <dbReference type="ChEBI" id="CHEBI:58409"/>
        <dbReference type="EC" id="2.7.7.13"/>
    </reaction>
</comment>
<comment type="pathway">
    <text>Nucleotide-sugar biosynthesis; GDP-alpha-D-mannose biosynthesis; GDP-alpha-D-mannose from alpha-D-mannose 1-phosphate (GTP route): step 1/1.</text>
</comment>
<comment type="subcellular location">
    <subcellularLocation>
        <location evidence="1">Cytoplasm</location>
    </subcellularLocation>
</comment>
<comment type="similarity">
    <text evidence="2">Belongs to the transferase hexapeptide repeat family.</text>
</comment>
<keyword id="KW-0131">Cell cycle</keyword>
<keyword id="KW-0963">Cytoplasm</keyword>
<keyword id="KW-0342">GTP-binding</keyword>
<keyword id="KW-0547">Nucleotide-binding</keyword>
<keyword id="KW-0548">Nucleotidyltransferase</keyword>
<keyword id="KW-1185">Reference proteome</keyword>
<keyword id="KW-0808">Transferase</keyword>
<name>MPG12_CANGA</name>
<gene>
    <name type="primary">MPG1</name>
    <name type="ordered locus">CAGL0H04983g</name>
</gene>
<accession>Q6FRY2</accession>
<sequence length="361" mass="39611">MKGLILVGGYGTRLRPLTLSVPKPLVEFCNRPMILHQIEALAEAGVTDIVLAVNYRPEVMVDTLKKYEKEYGVNITFSVETEPLGTAGPLKLAEKILKKDNSPFFVLNSDVICEYPFKELAEFHKSHGGKGTIVATKVDEPSKYGVIVHDLGTPNLIDRFVEKPKEFVGNRINAGLYILNPEVIDLIEMKPTSIETETFPKLVNEKSLYTFDLEGFWMDVGQPKDFLAGTGLYLQSLSRRHPEKLSTGSNIVSNAIIDPTAKISPDAKIGPDVVIGPNCVIGSGVRIVRSVLLKNCVVKENSLIKDTIVGWDSTIGRWCRLEGCAVLGHDVAVKDEVYVNGAKVLPHKSISANVPSEAIIM</sequence>
<reference key="1">
    <citation type="journal article" date="2004" name="Nature">
        <title>Genome evolution in yeasts.</title>
        <authorList>
            <person name="Dujon B."/>
            <person name="Sherman D."/>
            <person name="Fischer G."/>
            <person name="Durrens P."/>
            <person name="Casaregola S."/>
            <person name="Lafontaine I."/>
            <person name="de Montigny J."/>
            <person name="Marck C."/>
            <person name="Neuveglise C."/>
            <person name="Talla E."/>
            <person name="Goffard N."/>
            <person name="Frangeul L."/>
            <person name="Aigle M."/>
            <person name="Anthouard V."/>
            <person name="Babour A."/>
            <person name="Barbe V."/>
            <person name="Barnay S."/>
            <person name="Blanchin S."/>
            <person name="Beckerich J.-M."/>
            <person name="Beyne E."/>
            <person name="Bleykasten C."/>
            <person name="Boisrame A."/>
            <person name="Boyer J."/>
            <person name="Cattolico L."/>
            <person name="Confanioleri F."/>
            <person name="de Daruvar A."/>
            <person name="Despons L."/>
            <person name="Fabre E."/>
            <person name="Fairhead C."/>
            <person name="Ferry-Dumazet H."/>
            <person name="Groppi A."/>
            <person name="Hantraye F."/>
            <person name="Hennequin C."/>
            <person name="Jauniaux N."/>
            <person name="Joyet P."/>
            <person name="Kachouri R."/>
            <person name="Kerrest A."/>
            <person name="Koszul R."/>
            <person name="Lemaire M."/>
            <person name="Lesur I."/>
            <person name="Ma L."/>
            <person name="Muller H."/>
            <person name="Nicaud J.-M."/>
            <person name="Nikolski M."/>
            <person name="Oztas S."/>
            <person name="Ozier-Kalogeropoulos O."/>
            <person name="Pellenz S."/>
            <person name="Potier S."/>
            <person name="Richard G.-F."/>
            <person name="Straub M.-L."/>
            <person name="Suleau A."/>
            <person name="Swennen D."/>
            <person name="Tekaia F."/>
            <person name="Wesolowski-Louvel M."/>
            <person name="Westhof E."/>
            <person name="Wirth B."/>
            <person name="Zeniou-Meyer M."/>
            <person name="Zivanovic Y."/>
            <person name="Bolotin-Fukuhara M."/>
            <person name="Thierry A."/>
            <person name="Bouchier C."/>
            <person name="Caudron B."/>
            <person name="Scarpelli C."/>
            <person name="Gaillardin C."/>
            <person name="Weissenbach J."/>
            <person name="Wincker P."/>
            <person name="Souciet J.-L."/>
        </authorList>
    </citation>
    <scope>NUCLEOTIDE SEQUENCE [LARGE SCALE GENOMIC DNA]</scope>
    <source>
        <strain>ATCC 2001 / BCRC 20586 / JCM 3761 / NBRC 0622 / NRRL Y-65 / CBS 138</strain>
    </source>
</reference>
<protein>
    <recommendedName>
        <fullName>Mannose-1-phosphate guanyltransferase 2</fullName>
        <ecNumber>2.7.7.13</ecNumber>
    </recommendedName>
    <alternativeName>
        <fullName>ATP-mannose-1-phosphate guanylyltransferase 2</fullName>
    </alternativeName>
    <alternativeName>
        <fullName>GDP-mannose pyrophosphorylase 2</fullName>
    </alternativeName>
</protein>
<evidence type="ECO:0000250" key="1"/>
<evidence type="ECO:0000305" key="2"/>
<organism>
    <name type="scientific">Candida glabrata (strain ATCC 2001 / BCRC 20586 / JCM 3761 / NBRC 0622 / NRRL Y-65 / CBS 138)</name>
    <name type="common">Yeast</name>
    <name type="synonym">Nakaseomyces glabratus</name>
    <dbReference type="NCBI Taxonomy" id="284593"/>
    <lineage>
        <taxon>Eukaryota</taxon>
        <taxon>Fungi</taxon>
        <taxon>Dikarya</taxon>
        <taxon>Ascomycota</taxon>
        <taxon>Saccharomycotina</taxon>
        <taxon>Saccharomycetes</taxon>
        <taxon>Saccharomycetales</taxon>
        <taxon>Saccharomycetaceae</taxon>
        <taxon>Nakaseomyces</taxon>
    </lineage>
</organism>
<dbReference type="EC" id="2.7.7.13"/>
<dbReference type="EMBL" id="CR380954">
    <property type="protein sequence ID" value="CAG59945.1"/>
    <property type="molecule type" value="Genomic_DNA"/>
</dbReference>
<dbReference type="SMR" id="Q6FRY2"/>
<dbReference type="STRING" id="284593.Q6FRY2"/>
<dbReference type="EnsemblFungi" id="CAGL0H04983g-T">
    <property type="protein sequence ID" value="CAGL0H04983g-T-p1"/>
    <property type="gene ID" value="CAGL0H04983g"/>
</dbReference>
<dbReference type="KEGG" id="cgr:2888449"/>
<dbReference type="CGD" id="CAL0129988">
    <property type="gene designation" value="PSA1"/>
</dbReference>
<dbReference type="VEuPathDB" id="FungiDB:B1J91_H04983g"/>
<dbReference type="VEuPathDB" id="FungiDB:CAGL0H04983g"/>
<dbReference type="eggNOG" id="KOG1322">
    <property type="taxonomic scope" value="Eukaryota"/>
</dbReference>
<dbReference type="HOGENOM" id="CLU_029499_0_0_1"/>
<dbReference type="InParanoid" id="Q6FRY2"/>
<dbReference type="OMA" id="GRPFLEW"/>
<dbReference type="UniPathway" id="UPA00126">
    <property type="reaction ID" value="UER00930"/>
</dbReference>
<dbReference type="Proteomes" id="UP000002428">
    <property type="component" value="Chromosome H"/>
</dbReference>
<dbReference type="GO" id="GO:0005737">
    <property type="term" value="C:cytoplasm"/>
    <property type="evidence" value="ECO:0007669"/>
    <property type="project" value="UniProtKB-SubCell"/>
</dbReference>
<dbReference type="GO" id="GO:0005525">
    <property type="term" value="F:GTP binding"/>
    <property type="evidence" value="ECO:0007669"/>
    <property type="project" value="UniProtKB-KW"/>
</dbReference>
<dbReference type="GO" id="GO:0004475">
    <property type="term" value="F:mannose-1-phosphate guanylyltransferase (GTP) activity"/>
    <property type="evidence" value="ECO:0007669"/>
    <property type="project" value="UniProtKB-EC"/>
</dbReference>
<dbReference type="GO" id="GO:0009298">
    <property type="term" value="P:GDP-mannose biosynthetic process"/>
    <property type="evidence" value="ECO:0007669"/>
    <property type="project" value="UniProtKB-UniPathway"/>
</dbReference>
<dbReference type="CDD" id="cd06425">
    <property type="entry name" value="M1P_guanylylT_B_like_N"/>
    <property type="match status" value="1"/>
</dbReference>
<dbReference type="FunFam" id="3.90.550.10:FF:000013">
    <property type="entry name" value="mannose-1-phosphate guanyltransferase beta"/>
    <property type="match status" value="1"/>
</dbReference>
<dbReference type="Gene3D" id="2.160.10.10">
    <property type="entry name" value="Hexapeptide repeat proteins"/>
    <property type="match status" value="1"/>
</dbReference>
<dbReference type="Gene3D" id="3.90.550.10">
    <property type="entry name" value="Spore Coat Polysaccharide Biosynthesis Protein SpsA, Chain A"/>
    <property type="match status" value="1"/>
</dbReference>
<dbReference type="InterPro" id="IPR056729">
    <property type="entry name" value="GMPPB_C"/>
</dbReference>
<dbReference type="InterPro" id="IPR045233">
    <property type="entry name" value="GMPPB_N"/>
</dbReference>
<dbReference type="InterPro" id="IPR050486">
    <property type="entry name" value="Mannose-1P_guanyltransferase"/>
</dbReference>
<dbReference type="InterPro" id="IPR005835">
    <property type="entry name" value="NTP_transferase_dom"/>
</dbReference>
<dbReference type="InterPro" id="IPR029044">
    <property type="entry name" value="Nucleotide-diphossugar_trans"/>
</dbReference>
<dbReference type="PANTHER" id="PTHR22572">
    <property type="entry name" value="SUGAR-1-PHOSPHATE GUANYL TRANSFERASE"/>
    <property type="match status" value="1"/>
</dbReference>
<dbReference type="Pfam" id="PF25087">
    <property type="entry name" value="GMPPB_C"/>
    <property type="match status" value="1"/>
</dbReference>
<dbReference type="Pfam" id="PF00483">
    <property type="entry name" value="NTP_transferase"/>
    <property type="match status" value="1"/>
</dbReference>
<dbReference type="SUPFAM" id="SSF53448">
    <property type="entry name" value="Nucleotide-diphospho-sugar transferases"/>
    <property type="match status" value="1"/>
</dbReference>
<dbReference type="PROSITE" id="PS00101">
    <property type="entry name" value="HEXAPEP_TRANSFERASES"/>
    <property type="match status" value="1"/>
</dbReference>